<name>MMDB_PROMO</name>
<proteinExistence type="evidence at protein level"/>
<sequence>MLQAILDFYHSTGFYGLNMGSIIMMLVACVFLYLAIAKEFEPLLLVPISFGILLTNLPFAGMMAEPLLEVHEKLSASGAHLYTAHTAEPGGLLYYLFQGDHLGIFPPLIFLGVGAMTDFGPLISNPKSLLLGAAAQFGIFVTFFGAIASGLFTAQEAASIGIIGGADGPTAIFLSSKLAPHLMGPIAVAAYSYMALVPIIQPPIMTALTSETERKIKMSQLRLVSKREKIIFPIVVTILVSLIVPPAATLVGMLMLGNLFRECGVVGRLEDTAKNALINIITIFLGVTVGATATAEAFLKVETLAILGLGIVAFGIGTGSGVLLAKFMNKLSKEPINPLLGSAGVSAVPMAARVSQVVGQKADPTNFLLMHAMGPNVAGVIGSAVSAGVLLSLFG</sequence>
<gene>
    <name evidence="4" type="primary">mmdB</name>
</gene>
<protein>
    <recommendedName>
        <fullName evidence="5">Methylmalonyl-CoA decarboxylase subunit beta</fullName>
        <ecNumber evidence="3">7.2.4.3</ecNumber>
    </recommendedName>
</protein>
<organism>
    <name type="scientific">Propionigenium modestum</name>
    <dbReference type="NCBI Taxonomy" id="2333"/>
    <lineage>
        <taxon>Bacteria</taxon>
        <taxon>Fusobacteriati</taxon>
        <taxon>Fusobacteriota</taxon>
        <taxon>Fusobacteriia</taxon>
        <taxon>Fusobacteriales</taxon>
        <taxon>Fusobacteriaceae</taxon>
        <taxon>Propionigenium</taxon>
    </lineage>
</organism>
<dbReference type="EC" id="7.2.4.3" evidence="3"/>
<dbReference type="EMBL" id="AJ002015">
    <property type="protein sequence ID" value="CAA05140.1"/>
    <property type="molecule type" value="Genomic_DNA"/>
</dbReference>
<dbReference type="PIR" id="T44985">
    <property type="entry name" value="T44985"/>
</dbReference>
<dbReference type="SMR" id="O54031"/>
<dbReference type="KEGG" id="ag:CAA05140"/>
<dbReference type="GO" id="GO:0005886">
    <property type="term" value="C:plasma membrane"/>
    <property type="evidence" value="ECO:0007669"/>
    <property type="project" value="UniProtKB-SubCell"/>
</dbReference>
<dbReference type="GO" id="GO:0016829">
    <property type="term" value="F:lyase activity"/>
    <property type="evidence" value="ECO:0007669"/>
    <property type="project" value="InterPro"/>
</dbReference>
<dbReference type="GO" id="GO:0006814">
    <property type="term" value="P:sodium ion transport"/>
    <property type="evidence" value="ECO:0007669"/>
    <property type="project" value="UniProtKB-KW"/>
</dbReference>
<dbReference type="InterPro" id="IPR005661">
    <property type="entry name" value="OadB_MmdB"/>
</dbReference>
<dbReference type="NCBIfam" id="TIGR01109">
    <property type="entry name" value="Na_pump_decarbB"/>
    <property type="match status" value="1"/>
</dbReference>
<dbReference type="PANTHER" id="PTHR35806">
    <property type="entry name" value="OXALOACETATE DECARBOXYLASE BETA CHAIN 2"/>
    <property type="match status" value="1"/>
</dbReference>
<dbReference type="PANTHER" id="PTHR35806:SF1">
    <property type="entry name" value="OXALOACETATE DECARBOXYLASE BETA CHAIN 2"/>
    <property type="match status" value="1"/>
</dbReference>
<dbReference type="Pfam" id="PF03977">
    <property type="entry name" value="OAD_beta"/>
    <property type="match status" value="1"/>
</dbReference>
<dbReference type="PIRSF" id="PIRSF015658">
    <property type="entry name" value="MmdB_OadB"/>
    <property type="match status" value="1"/>
</dbReference>
<accession>O54031</accession>
<evidence type="ECO:0000250" key="1">
    <source>
        <dbReference type="UniProtKB" id="Q57286"/>
    </source>
</evidence>
<evidence type="ECO:0000255" key="2"/>
<evidence type="ECO:0000269" key="3">
    <source>
    </source>
</evidence>
<evidence type="ECO:0000303" key="4">
    <source>
    </source>
</evidence>
<evidence type="ECO:0000305" key="5"/>
<reference key="1">
    <citation type="journal article" date="1997" name="Eur. J. Biochem.">
        <title>Methylmalonyl-CoA decarboxylase from Propionigenium modestum--cloning and sequencing of the structural genes and purification of the enzyme complex.</title>
        <authorList>
            <person name="Bott M."/>
            <person name="Pfister K."/>
            <person name="Burda P."/>
            <person name="Kalbermatter O."/>
            <person name="Woehlke G."/>
            <person name="Dimroth P."/>
        </authorList>
    </citation>
    <scope>NUCLEOTIDE SEQUENCE [GENOMIC DNA]</scope>
    <scope>FUNCTION</scope>
    <scope>CATALYTIC ACTIVITY</scope>
    <scope>SUBUNIT</scope>
    <scope>SUBCELLULAR LOCATION</scope>
    <source>
        <strain>DSM 2376 / Gra Succ2</strain>
    </source>
</reference>
<feature type="chain" id="PRO_0000453536" description="Methylmalonyl-CoA decarboxylase subunit beta">
    <location>
        <begin position="1"/>
        <end position="395"/>
    </location>
</feature>
<feature type="transmembrane region" description="Helical" evidence="2">
    <location>
        <begin position="17"/>
        <end position="37"/>
    </location>
</feature>
<feature type="transmembrane region" description="Helical" evidence="2">
    <location>
        <begin position="43"/>
        <end position="63"/>
    </location>
</feature>
<feature type="transmembrane region" description="Helical" evidence="2">
    <location>
        <begin position="103"/>
        <end position="123"/>
    </location>
</feature>
<feature type="transmembrane region" description="Helical" evidence="2">
    <location>
        <begin position="128"/>
        <end position="148"/>
    </location>
</feature>
<feature type="transmembrane region" description="Helical" evidence="2">
    <location>
        <begin position="180"/>
        <end position="200"/>
    </location>
</feature>
<feature type="transmembrane region" description="Helical" evidence="2">
    <location>
        <begin position="230"/>
        <end position="250"/>
    </location>
</feature>
<feature type="transmembrane region" description="Helical" evidence="2">
    <location>
        <begin position="278"/>
        <end position="298"/>
    </location>
</feature>
<feature type="transmembrane region" description="Helical" evidence="2">
    <location>
        <begin position="304"/>
        <end position="324"/>
    </location>
</feature>
<feature type="transmembrane region" description="Helical" evidence="2">
    <location>
        <begin position="374"/>
        <end position="394"/>
    </location>
</feature>
<comment type="function">
    <text evidence="1 3">Tunnel subunit of the sodium ion pump methylmalonyl-CoA decarboxylase, which converts the chemical energy of a decarboxylation reaction into an electrochemical gradient of Na(+) ions across the cytoplasmic membrane, thereby creating a sodium ion motive force that is used for ATP synthesis (PubMed:9428714). The beta subunit catalyzes the decarboxylation of the carboxybiotin carrier protein and the coupled export of Na(+) ions (By similarity).</text>
</comment>
<comment type="catalytic activity">
    <reaction evidence="3">
        <text>(S)-methylmalonyl-CoA + Na(+)(in) + H(+)(out) = propanoyl-CoA + Na(+)(out) + CO2</text>
        <dbReference type="Rhea" id="RHEA:21396"/>
        <dbReference type="ChEBI" id="CHEBI:15378"/>
        <dbReference type="ChEBI" id="CHEBI:16526"/>
        <dbReference type="ChEBI" id="CHEBI:29101"/>
        <dbReference type="ChEBI" id="CHEBI:57327"/>
        <dbReference type="ChEBI" id="CHEBI:57392"/>
        <dbReference type="EC" id="7.2.4.3"/>
    </reaction>
</comment>
<comment type="subunit">
    <text evidence="3">The methylmalonyl-CoA decarboxylase is composed of four subunits: the carboxyltransferase alpha subunit (MmdA), the tunnel beta subunit (MmdB), the biotin-containing gamma subunit (MmdC) and the delta subunit (MmdD).</text>
</comment>
<comment type="subcellular location">
    <subcellularLocation>
        <location evidence="3">Cell membrane</location>
        <topology evidence="2">Multi-pass membrane protein</topology>
    </subcellularLocation>
</comment>
<comment type="PTM">
    <text evidence="3">The N-terminus is blocked.</text>
</comment>
<comment type="similarity">
    <text evidence="5">Belongs to the GcdB/MmdB/OadB family.</text>
</comment>
<keyword id="KW-1003">Cell membrane</keyword>
<keyword id="KW-0406">Ion transport</keyword>
<keyword id="KW-0472">Membrane</keyword>
<keyword id="KW-0915">Sodium</keyword>
<keyword id="KW-0739">Sodium transport</keyword>
<keyword id="KW-1278">Translocase</keyword>
<keyword id="KW-0812">Transmembrane</keyword>
<keyword id="KW-1133">Transmembrane helix</keyword>
<keyword id="KW-0813">Transport</keyword>